<accession>Q0HLI0</accession>
<reference key="1">
    <citation type="submission" date="2006-08" db="EMBL/GenBank/DDBJ databases">
        <title>Complete sequence of Shewanella sp. MR-4.</title>
        <authorList>
            <consortium name="US DOE Joint Genome Institute"/>
            <person name="Copeland A."/>
            <person name="Lucas S."/>
            <person name="Lapidus A."/>
            <person name="Barry K."/>
            <person name="Detter J.C."/>
            <person name="Glavina del Rio T."/>
            <person name="Hammon N."/>
            <person name="Israni S."/>
            <person name="Dalin E."/>
            <person name="Tice H."/>
            <person name="Pitluck S."/>
            <person name="Kiss H."/>
            <person name="Brettin T."/>
            <person name="Bruce D."/>
            <person name="Han C."/>
            <person name="Tapia R."/>
            <person name="Gilna P."/>
            <person name="Schmutz J."/>
            <person name="Larimer F."/>
            <person name="Land M."/>
            <person name="Hauser L."/>
            <person name="Kyrpides N."/>
            <person name="Mikhailova N."/>
            <person name="Nealson K."/>
            <person name="Konstantinidis K."/>
            <person name="Klappenbach J."/>
            <person name="Tiedje J."/>
            <person name="Richardson P."/>
        </authorList>
    </citation>
    <scope>NUCLEOTIDE SEQUENCE [LARGE SCALE GENOMIC DNA]</scope>
    <source>
        <strain>MR-4</strain>
    </source>
</reference>
<protein>
    <recommendedName>
        <fullName evidence="1">Peptidyl-tRNA hydrolase</fullName>
        <shortName evidence="1">Pth</shortName>
        <ecNumber evidence="1">3.1.1.29</ecNumber>
    </recommendedName>
</protein>
<feature type="chain" id="PRO_0000264104" description="Peptidyl-tRNA hydrolase">
    <location>
        <begin position="1"/>
        <end position="195"/>
    </location>
</feature>
<feature type="active site" description="Proton acceptor" evidence="1">
    <location>
        <position position="22"/>
    </location>
</feature>
<feature type="binding site" evidence="1">
    <location>
        <position position="17"/>
    </location>
    <ligand>
        <name>tRNA</name>
        <dbReference type="ChEBI" id="CHEBI:17843"/>
    </ligand>
</feature>
<feature type="binding site" evidence="1">
    <location>
        <position position="68"/>
    </location>
    <ligand>
        <name>tRNA</name>
        <dbReference type="ChEBI" id="CHEBI:17843"/>
    </ligand>
</feature>
<feature type="binding site" evidence="1">
    <location>
        <position position="70"/>
    </location>
    <ligand>
        <name>tRNA</name>
        <dbReference type="ChEBI" id="CHEBI:17843"/>
    </ligand>
</feature>
<feature type="binding site" evidence="1">
    <location>
        <position position="116"/>
    </location>
    <ligand>
        <name>tRNA</name>
        <dbReference type="ChEBI" id="CHEBI:17843"/>
    </ligand>
</feature>
<feature type="site" description="Discriminates between blocked and unblocked aminoacyl-tRNA" evidence="1">
    <location>
        <position position="12"/>
    </location>
</feature>
<feature type="site" description="Stabilizes the basic form of H active site to accept a proton" evidence="1">
    <location>
        <position position="95"/>
    </location>
</feature>
<gene>
    <name evidence="1" type="primary">pth</name>
    <name type="ordered locus">Shewmr4_1007</name>
</gene>
<dbReference type="EC" id="3.1.1.29" evidence="1"/>
<dbReference type="EMBL" id="CP000446">
    <property type="protein sequence ID" value="ABI38087.1"/>
    <property type="molecule type" value="Genomic_DNA"/>
</dbReference>
<dbReference type="RefSeq" id="WP_011621799.1">
    <property type="nucleotide sequence ID" value="NC_008321.1"/>
</dbReference>
<dbReference type="SMR" id="Q0HLI0"/>
<dbReference type="KEGG" id="she:Shewmr4_1007"/>
<dbReference type="HOGENOM" id="CLU_062456_3_1_6"/>
<dbReference type="GO" id="GO:0005737">
    <property type="term" value="C:cytoplasm"/>
    <property type="evidence" value="ECO:0007669"/>
    <property type="project" value="UniProtKB-SubCell"/>
</dbReference>
<dbReference type="GO" id="GO:0004045">
    <property type="term" value="F:peptidyl-tRNA hydrolase activity"/>
    <property type="evidence" value="ECO:0007669"/>
    <property type="project" value="UniProtKB-UniRule"/>
</dbReference>
<dbReference type="GO" id="GO:0000049">
    <property type="term" value="F:tRNA binding"/>
    <property type="evidence" value="ECO:0007669"/>
    <property type="project" value="UniProtKB-UniRule"/>
</dbReference>
<dbReference type="GO" id="GO:0006515">
    <property type="term" value="P:protein quality control for misfolded or incompletely synthesized proteins"/>
    <property type="evidence" value="ECO:0007669"/>
    <property type="project" value="UniProtKB-UniRule"/>
</dbReference>
<dbReference type="GO" id="GO:0072344">
    <property type="term" value="P:rescue of stalled ribosome"/>
    <property type="evidence" value="ECO:0007669"/>
    <property type="project" value="UniProtKB-UniRule"/>
</dbReference>
<dbReference type="CDD" id="cd00462">
    <property type="entry name" value="PTH"/>
    <property type="match status" value="1"/>
</dbReference>
<dbReference type="FunFam" id="3.40.50.1470:FF:000001">
    <property type="entry name" value="Peptidyl-tRNA hydrolase"/>
    <property type="match status" value="1"/>
</dbReference>
<dbReference type="Gene3D" id="3.40.50.1470">
    <property type="entry name" value="Peptidyl-tRNA hydrolase"/>
    <property type="match status" value="1"/>
</dbReference>
<dbReference type="HAMAP" id="MF_00083">
    <property type="entry name" value="Pept_tRNA_hydro_bact"/>
    <property type="match status" value="1"/>
</dbReference>
<dbReference type="InterPro" id="IPR001328">
    <property type="entry name" value="Pept_tRNA_hydro"/>
</dbReference>
<dbReference type="InterPro" id="IPR018171">
    <property type="entry name" value="Pept_tRNA_hydro_CS"/>
</dbReference>
<dbReference type="InterPro" id="IPR036416">
    <property type="entry name" value="Pept_tRNA_hydro_sf"/>
</dbReference>
<dbReference type="NCBIfam" id="TIGR00447">
    <property type="entry name" value="pth"/>
    <property type="match status" value="1"/>
</dbReference>
<dbReference type="PANTHER" id="PTHR17224">
    <property type="entry name" value="PEPTIDYL-TRNA HYDROLASE"/>
    <property type="match status" value="1"/>
</dbReference>
<dbReference type="PANTHER" id="PTHR17224:SF1">
    <property type="entry name" value="PEPTIDYL-TRNA HYDROLASE"/>
    <property type="match status" value="1"/>
</dbReference>
<dbReference type="Pfam" id="PF01195">
    <property type="entry name" value="Pept_tRNA_hydro"/>
    <property type="match status" value="1"/>
</dbReference>
<dbReference type="SUPFAM" id="SSF53178">
    <property type="entry name" value="Peptidyl-tRNA hydrolase-like"/>
    <property type="match status" value="1"/>
</dbReference>
<dbReference type="PROSITE" id="PS01195">
    <property type="entry name" value="PEPT_TRNA_HYDROL_1"/>
    <property type="match status" value="1"/>
</dbReference>
<dbReference type="PROSITE" id="PS01196">
    <property type="entry name" value="PEPT_TRNA_HYDROL_2"/>
    <property type="match status" value="1"/>
</dbReference>
<name>PTH_SHESM</name>
<comment type="function">
    <text evidence="1">Hydrolyzes ribosome-free peptidyl-tRNAs (with 1 or more amino acids incorporated), which drop off the ribosome during protein synthesis, or as a result of ribosome stalling.</text>
</comment>
<comment type="function">
    <text evidence="1">Catalyzes the release of premature peptidyl moieties from peptidyl-tRNA molecules trapped in stalled 50S ribosomal subunits, and thus maintains levels of free tRNAs and 50S ribosomes.</text>
</comment>
<comment type="catalytic activity">
    <reaction evidence="1">
        <text>an N-acyl-L-alpha-aminoacyl-tRNA + H2O = an N-acyl-L-amino acid + a tRNA + H(+)</text>
        <dbReference type="Rhea" id="RHEA:54448"/>
        <dbReference type="Rhea" id="RHEA-COMP:10123"/>
        <dbReference type="Rhea" id="RHEA-COMP:13883"/>
        <dbReference type="ChEBI" id="CHEBI:15377"/>
        <dbReference type="ChEBI" id="CHEBI:15378"/>
        <dbReference type="ChEBI" id="CHEBI:59874"/>
        <dbReference type="ChEBI" id="CHEBI:78442"/>
        <dbReference type="ChEBI" id="CHEBI:138191"/>
        <dbReference type="EC" id="3.1.1.29"/>
    </reaction>
</comment>
<comment type="subunit">
    <text evidence="1">Monomer.</text>
</comment>
<comment type="subcellular location">
    <subcellularLocation>
        <location evidence="1">Cytoplasm</location>
    </subcellularLocation>
</comment>
<comment type="similarity">
    <text evidence="1">Belongs to the PTH family.</text>
</comment>
<organism>
    <name type="scientific">Shewanella sp. (strain MR-4)</name>
    <dbReference type="NCBI Taxonomy" id="60480"/>
    <lineage>
        <taxon>Bacteria</taxon>
        <taxon>Pseudomonadati</taxon>
        <taxon>Pseudomonadota</taxon>
        <taxon>Gammaproteobacteria</taxon>
        <taxon>Alteromonadales</taxon>
        <taxon>Shewanellaceae</taxon>
        <taxon>Shewanella</taxon>
    </lineage>
</organism>
<evidence type="ECO:0000255" key="1">
    <source>
        <dbReference type="HAMAP-Rule" id="MF_00083"/>
    </source>
</evidence>
<keyword id="KW-0963">Cytoplasm</keyword>
<keyword id="KW-0378">Hydrolase</keyword>
<keyword id="KW-0694">RNA-binding</keyword>
<keyword id="KW-0820">tRNA-binding</keyword>
<proteinExistence type="inferred from homology"/>
<sequence length="195" mass="21180">MSEIKLIVGLANPGAEYAQTRHNAGAWYVEELARICGVSLVPDSKYFGLTARAVLHGKDVRLLIPTTYMNLSGKAVGALANFFRITPEEILVAHDELDMPPGVAKFKLGGGHGGHNGLKDIIAKLANDKNFYRLRIGIGHPGDKNKVSGYVLGKAPAKEQELINAAVDEAVRSTEVLFKEDMVKAMTRLHSFKAE</sequence>